<evidence type="ECO:0000256" key="1">
    <source>
        <dbReference type="SAM" id="MobiDB-lite"/>
    </source>
</evidence>
<evidence type="ECO:0007829" key="2">
    <source>
        <dbReference type="PDB" id="5SYQ"/>
    </source>
</evidence>
<reference key="1">
    <citation type="journal article" date="1998" name="Nature">
        <title>The complete genome of the hyperthermophilic bacterium Aquifex aeolicus.</title>
        <authorList>
            <person name="Deckert G."/>
            <person name="Warren P.V."/>
            <person name="Gaasterland T."/>
            <person name="Young W.G."/>
            <person name="Lenox A.L."/>
            <person name="Graham D.E."/>
            <person name="Overbeek R."/>
            <person name="Snead M.A."/>
            <person name="Keller M."/>
            <person name="Aujay M."/>
            <person name="Huber R."/>
            <person name="Feldman R.A."/>
            <person name="Short J.M."/>
            <person name="Olsen G.J."/>
            <person name="Swanson R.V."/>
        </authorList>
    </citation>
    <scope>NUCLEOTIDE SEQUENCE [LARGE SCALE GENOMIC DNA]</scope>
    <source>
        <strain>VF5</strain>
    </source>
</reference>
<proteinExistence type="evidence at protein level"/>
<dbReference type="EMBL" id="AE000657">
    <property type="protein sequence ID" value="AAC07755.1"/>
    <property type="molecule type" value="Genomic_DNA"/>
</dbReference>
<dbReference type="PIR" id="D70469">
    <property type="entry name" value="D70469"/>
</dbReference>
<dbReference type="RefSeq" id="NP_214353.1">
    <property type="nucleotide sequence ID" value="NC_000918.1"/>
</dbReference>
<dbReference type="RefSeq" id="WP_010881289.1">
    <property type="nucleotide sequence ID" value="NC_000918.1"/>
</dbReference>
<dbReference type="PDB" id="5SYQ">
    <property type="method" value="NMR"/>
    <property type="chains" value="A=31-114"/>
</dbReference>
<dbReference type="PDBsum" id="5SYQ"/>
<dbReference type="BMRB" id="O67784"/>
<dbReference type="SMR" id="O67784"/>
<dbReference type="STRING" id="224324.aq_1974"/>
<dbReference type="EnsemblBacteria" id="AAC07755">
    <property type="protein sequence ID" value="AAC07755"/>
    <property type="gene ID" value="aq_1974"/>
</dbReference>
<dbReference type="KEGG" id="aae:aq_1974"/>
<dbReference type="HOGENOM" id="CLU_2115905_0_0_0"/>
<dbReference type="InParanoid" id="O67784"/>
<dbReference type="OrthoDB" id="15174at2"/>
<dbReference type="Proteomes" id="UP000000798">
    <property type="component" value="Chromosome"/>
</dbReference>
<dbReference type="InterPro" id="IPR055016">
    <property type="entry name" value="Aq_1974-like"/>
</dbReference>
<dbReference type="Pfam" id="PF22323">
    <property type="entry name" value="Aq_1974-like"/>
    <property type="match status" value="1"/>
</dbReference>
<keyword id="KW-0002">3D-structure</keyword>
<keyword id="KW-1185">Reference proteome</keyword>
<accession>O67784</accession>
<name>Y1974_AQUAE</name>
<gene>
    <name type="ordered locus">aq_1974</name>
</gene>
<protein>
    <recommendedName>
        <fullName>Uncharacterized protein aq_1974</fullName>
    </recommendedName>
</protein>
<organism>
    <name type="scientific">Aquifex aeolicus (strain VF5)</name>
    <dbReference type="NCBI Taxonomy" id="224324"/>
    <lineage>
        <taxon>Bacteria</taxon>
        <taxon>Pseudomonadati</taxon>
        <taxon>Aquificota</taxon>
        <taxon>Aquificia</taxon>
        <taxon>Aquificales</taxon>
        <taxon>Aquificaceae</taxon>
        <taxon>Aquifex</taxon>
    </lineage>
</organism>
<sequence length="114" mass="13914">MLKKILSLFKKEEPKTEEKPTEVEEKKEEREEKEEKKVRELTPQELELFKRAMGITPHNYWQWASRTNNFKLLTDGEWVWVEGYEEHIGKQLPLNQARAWSWEFIKNRLKELNL</sequence>
<feature type="chain" id="PRO_0000186960" description="Uncharacterized protein aq_1974">
    <location>
        <begin position="1"/>
        <end position="114"/>
    </location>
</feature>
<feature type="region of interest" description="Disordered" evidence="1">
    <location>
        <begin position="1"/>
        <end position="37"/>
    </location>
</feature>
<feature type="compositionally biased region" description="Basic and acidic residues" evidence="1">
    <location>
        <begin position="9"/>
        <end position="37"/>
    </location>
</feature>
<feature type="turn" evidence="2">
    <location>
        <begin position="43"/>
        <end position="46"/>
    </location>
</feature>
<feature type="helix" evidence="2">
    <location>
        <begin position="47"/>
        <end position="53"/>
    </location>
</feature>
<feature type="strand" evidence="2">
    <location>
        <begin position="57"/>
        <end position="59"/>
    </location>
</feature>
<feature type="helix" evidence="2">
    <location>
        <begin position="60"/>
        <end position="66"/>
    </location>
</feature>
<feature type="turn" evidence="2">
    <location>
        <begin position="67"/>
        <end position="70"/>
    </location>
</feature>
<feature type="strand" evidence="2">
    <location>
        <begin position="72"/>
        <end position="77"/>
    </location>
</feature>
<feature type="strand" evidence="2">
    <location>
        <begin position="79"/>
        <end position="81"/>
    </location>
</feature>
<feature type="helix" evidence="2">
    <location>
        <begin position="85"/>
        <end position="87"/>
    </location>
</feature>
<feature type="turn" evidence="2">
    <location>
        <begin position="94"/>
        <end position="96"/>
    </location>
</feature>
<feature type="helix" evidence="2">
    <location>
        <begin position="102"/>
        <end position="112"/>
    </location>
</feature>